<organism>
    <name type="scientific">Rhinoceros unicornis</name>
    <name type="common">Greater Indian rhinoceros</name>
    <dbReference type="NCBI Taxonomy" id="9809"/>
    <lineage>
        <taxon>Eukaryota</taxon>
        <taxon>Metazoa</taxon>
        <taxon>Chordata</taxon>
        <taxon>Craniata</taxon>
        <taxon>Vertebrata</taxon>
        <taxon>Euteleostomi</taxon>
        <taxon>Mammalia</taxon>
        <taxon>Eutheria</taxon>
        <taxon>Laurasiatheria</taxon>
        <taxon>Perissodactyla</taxon>
        <taxon>Rhinocerotidae</taxon>
        <taxon>Rhinoceros</taxon>
    </lineage>
</organism>
<accession>Q96067</accession>
<sequence length="98" mass="10928">MSLIHINIFLAFTVSLMGLLMYRSHLMSSLLCLEGMMLSLFIMATMMVLNSHFTLAIMMPIILLVFAACEAALGLSLLVMISNTYGMDYVQNLNLLQC</sequence>
<name>NU4LM_RHIUN</name>
<gene>
    <name type="primary">MT-ND4L</name>
    <name type="synonym">MTND4L</name>
    <name type="synonym">NADH4L</name>
    <name type="synonym">ND4L</name>
</gene>
<keyword id="KW-0249">Electron transport</keyword>
<keyword id="KW-0472">Membrane</keyword>
<keyword id="KW-0496">Mitochondrion</keyword>
<keyword id="KW-0999">Mitochondrion inner membrane</keyword>
<keyword id="KW-0520">NAD</keyword>
<keyword id="KW-0679">Respiratory chain</keyword>
<keyword id="KW-1278">Translocase</keyword>
<keyword id="KW-0812">Transmembrane</keyword>
<keyword id="KW-1133">Transmembrane helix</keyword>
<keyword id="KW-0813">Transport</keyword>
<keyword id="KW-0830">Ubiquinone</keyword>
<proteinExistence type="inferred from homology"/>
<dbReference type="EC" id="7.1.1.2"/>
<dbReference type="EMBL" id="X97336">
    <property type="protein sequence ID" value="CAA66009.1"/>
    <property type="molecule type" value="Genomic_DNA"/>
</dbReference>
<dbReference type="PIR" id="T11255">
    <property type="entry name" value="T11255"/>
</dbReference>
<dbReference type="RefSeq" id="NP_007376.1">
    <property type="nucleotide sequence ID" value="NC_001779.1"/>
</dbReference>
<dbReference type="SMR" id="Q96067"/>
<dbReference type="GeneID" id="808040"/>
<dbReference type="CTD" id="4539"/>
<dbReference type="GO" id="GO:0005743">
    <property type="term" value="C:mitochondrial inner membrane"/>
    <property type="evidence" value="ECO:0000250"/>
    <property type="project" value="UniProtKB"/>
</dbReference>
<dbReference type="GO" id="GO:0045271">
    <property type="term" value="C:respiratory chain complex I"/>
    <property type="evidence" value="ECO:0000250"/>
    <property type="project" value="UniProtKB"/>
</dbReference>
<dbReference type="GO" id="GO:0008137">
    <property type="term" value="F:NADH dehydrogenase (ubiquinone) activity"/>
    <property type="evidence" value="ECO:0000250"/>
    <property type="project" value="UniProtKB"/>
</dbReference>
<dbReference type="GO" id="GO:0042773">
    <property type="term" value="P:ATP synthesis coupled electron transport"/>
    <property type="evidence" value="ECO:0007669"/>
    <property type="project" value="InterPro"/>
</dbReference>
<dbReference type="FunFam" id="1.10.287.3510:FF:000002">
    <property type="entry name" value="NADH-ubiquinone oxidoreductase chain 4L"/>
    <property type="match status" value="1"/>
</dbReference>
<dbReference type="Gene3D" id="1.10.287.3510">
    <property type="match status" value="1"/>
</dbReference>
<dbReference type="InterPro" id="IPR001133">
    <property type="entry name" value="NADH_UbQ_OxRdtase_chain4L/K"/>
</dbReference>
<dbReference type="InterPro" id="IPR039428">
    <property type="entry name" value="NUOK/Mnh_C1-like"/>
</dbReference>
<dbReference type="PANTHER" id="PTHR11434:SF0">
    <property type="entry name" value="NADH-UBIQUINONE OXIDOREDUCTASE CHAIN 4L"/>
    <property type="match status" value="1"/>
</dbReference>
<dbReference type="PANTHER" id="PTHR11434">
    <property type="entry name" value="NADH-UBIQUINONE OXIDOREDUCTASE SUBUNIT ND4L"/>
    <property type="match status" value="1"/>
</dbReference>
<dbReference type="Pfam" id="PF00420">
    <property type="entry name" value="Oxidored_q2"/>
    <property type="match status" value="1"/>
</dbReference>
<feature type="chain" id="PRO_0000118485" description="NADH-ubiquinone oxidoreductase chain 4L">
    <location>
        <begin position="1"/>
        <end position="98"/>
    </location>
</feature>
<feature type="transmembrane region" description="Helical" evidence="3">
    <location>
        <begin position="1"/>
        <end position="21"/>
    </location>
</feature>
<feature type="transmembrane region" description="Helical" evidence="3">
    <location>
        <begin position="29"/>
        <end position="49"/>
    </location>
</feature>
<feature type="transmembrane region" description="Helical" evidence="3">
    <location>
        <begin position="61"/>
        <end position="81"/>
    </location>
</feature>
<reference key="1">
    <citation type="journal article" date="1996" name="Mol. Biol. Evol.">
        <title>The complete mitochondrial DNA sequence of the greater Indian rhinoceros, Rhinoceros unicornis, and the Phylogenetic relationship among Carnivora, Perissodactyla, and Artiodactyla (+ Cetacea).</title>
        <authorList>
            <person name="Xu X."/>
            <person name="Janke A."/>
            <person name="Arnason U."/>
        </authorList>
    </citation>
    <scope>NUCLEOTIDE SEQUENCE [GENOMIC DNA]</scope>
    <source>
        <tissue>Kidney</tissue>
    </source>
</reference>
<comment type="function">
    <text evidence="1">Core subunit of the mitochondrial membrane respiratory chain NADH dehydrogenase (Complex I) which catalyzes electron transfer from NADH through the respiratory chain, using ubiquinone as an electron acceptor. Part of the enzyme membrane arm which is embedded in the lipid bilayer and involved in proton translocation.</text>
</comment>
<comment type="catalytic activity">
    <reaction evidence="1">
        <text>a ubiquinone + NADH + 5 H(+)(in) = a ubiquinol + NAD(+) + 4 H(+)(out)</text>
        <dbReference type="Rhea" id="RHEA:29091"/>
        <dbReference type="Rhea" id="RHEA-COMP:9565"/>
        <dbReference type="Rhea" id="RHEA-COMP:9566"/>
        <dbReference type="ChEBI" id="CHEBI:15378"/>
        <dbReference type="ChEBI" id="CHEBI:16389"/>
        <dbReference type="ChEBI" id="CHEBI:17976"/>
        <dbReference type="ChEBI" id="CHEBI:57540"/>
        <dbReference type="ChEBI" id="CHEBI:57945"/>
        <dbReference type="EC" id="7.1.1.2"/>
    </reaction>
    <physiologicalReaction direction="left-to-right" evidence="1">
        <dbReference type="Rhea" id="RHEA:29092"/>
    </physiologicalReaction>
</comment>
<comment type="subunit">
    <text evidence="2">Core subunit of respiratory chain NADH dehydrogenase (Complex I) which is composed of 45 different subunits.</text>
</comment>
<comment type="subcellular location">
    <subcellularLocation>
        <location evidence="2">Mitochondrion inner membrane</location>
        <topology evidence="3">Multi-pass membrane protein</topology>
    </subcellularLocation>
</comment>
<comment type="similarity">
    <text evidence="4">Belongs to the complex I subunit 4L family.</text>
</comment>
<evidence type="ECO:0000250" key="1">
    <source>
        <dbReference type="UniProtKB" id="P03901"/>
    </source>
</evidence>
<evidence type="ECO:0000250" key="2">
    <source>
        <dbReference type="UniProtKB" id="P03902"/>
    </source>
</evidence>
<evidence type="ECO:0000255" key="3"/>
<evidence type="ECO:0000305" key="4"/>
<geneLocation type="mitochondrion"/>
<protein>
    <recommendedName>
        <fullName>NADH-ubiquinone oxidoreductase chain 4L</fullName>
        <ecNumber>7.1.1.2</ecNumber>
    </recommendedName>
    <alternativeName>
        <fullName>NADH dehydrogenase subunit 4L</fullName>
    </alternativeName>
</protein>